<feature type="signal peptide" evidence="1">
    <location>
        <begin position="1"/>
        <end position="23"/>
    </location>
</feature>
<feature type="chain" id="PRO_0000088753" description="UPF0194 membrane protein in asrC 5'region">
    <location>
        <begin position="24"/>
        <end position="338" status="greater than"/>
    </location>
</feature>
<feature type="coiled-coil region" evidence="1">
    <location>
        <begin position="148"/>
        <end position="207"/>
    </location>
</feature>
<feature type="non-terminal residue">
    <location>
        <position position="338"/>
    </location>
</feature>
<name>YBHG_ACIFI</name>
<dbReference type="EMBL" id="AF173880">
    <property type="protein sequence ID" value="AAF69246.1"/>
    <property type="molecule type" value="Genomic_DNA"/>
</dbReference>
<dbReference type="SMR" id="Q9L9D4"/>
<dbReference type="GO" id="GO:0042597">
    <property type="term" value="C:periplasmic space"/>
    <property type="evidence" value="ECO:0007669"/>
    <property type="project" value="UniProtKB-SubCell"/>
</dbReference>
<dbReference type="Gene3D" id="2.40.30.170">
    <property type="match status" value="1"/>
</dbReference>
<dbReference type="Gene3D" id="2.40.50.100">
    <property type="match status" value="1"/>
</dbReference>
<dbReference type="Gene3D" id="1.10.287.470">
    <property type="entry name" value="Helix hairpin bin"/>
    <property type="match status" value="1"/>
</dbReference>
<dbReference type="InterPro" id="IPR032317">
    <property type="entry name" value="CusB_D23"/>
</dbReference>
<dbReference type="InterPro" id="IPR050465">
    <property type="entry name" value="UPF0194_transport"/>
</dbReference>
<dbReference type="PANTHER" id="PTHR32347">
    <property type="entry name" value="EFFLUX SYSTEM COMPONENT YKNX-RELATED"/>
    <property type="match status" value="1"/>
</dbReference>
<dbReference type="PANTHER" id="PTHR32347:SF29">
    <property type="entry name" value="UPF0194 MEMBRANE PROTEIN YBHG"/>
    <property type="match status" value="1"/>
</dbReference>
<dbReference type="Pfam" id="PF16576">
    <property type="entry name" value="HlyD_D23"/>
    <property type="match status" value="1"/>
</dbReference>
<dbReference type="PRINTS" id="PR01490">
    <property type="entry name" value="RTXTOXIND"/>
</dbReference>
<dbReference type="SUPFAM" id="SSF111369">
    <property type="entry name" value="HlyD-like secretion proteins"/>
    <property type="match status" value="2"/>
</dbReference>
<sequence length="338" mass="37548">MAISPKKRALALVVVLIVAGAVAYYFLSRHHAPEKTVTIYGNIDIRQVQAAFDDNGRLLDLRVQEGDRVKKGQLLADLDPVRFQDAVDKDAAVWPRKSRCWRACWRVPVRKKSPRPGPKPAAAQATLSNAEITWQRQQALAARQYVPKQSLDNAAAALKTARANLDRAQQALTLAIKGPRKEDIAAARQQLQADKAGLSLARRELTDTRLYAPEDGVVQDRILEPGDMVSPQTPVFTLALDNPVWVRAYLPEKALGQVRLGMKATISSDSFPGKSFPGWVGFISPTAEFTPKTVQTTELRTELVYRVRVYACNPQHRLRLGMPVTVHIPLTDNQPQKL</sequence>
<accession>Q9L9D4</accession>
<comment type="subcellular location">
    <subcellularLocation>
        <location evidence="2">Periplasm</location>
    </subcellularLocation>
</comment>
<comment type="similarity">
    <text evidence="2">Belongs to the UPF0194 family.</text>
</comment>
<comment type="caution">
    <text evidence="2">Comparisons with its orthologs suggests that this protein may be full-length.</text>
</comment>
<reference key="1">
    <citation type="journal article" date="2000" name="Appl. Environ. Microbiol.">
        <title>The chromosomal arsenic resistance genes of Thiobacillus ferrooxidans have an unusual arrangement and confer increased arsenic and antimony resistance to Escherichia coli.</title>
        <authorList>
            <person name="Butcher B.G."/>
            <person name="Deane S.M."/>
            <person name="Rawlings D.E."/>
        </authorList>
    </citation>
    <scope>NUCLEOTIDE SEQUENCE [GENOMIC DNA]</scope>
    <source>
        <strain>ATCC 33020 / DSM 29468 / JCM 18981 / 11Fe</strain>
    </source>
</reference>
<keyword id="KW-0175">Coiled coil</keyword>
<keyword id="KW-0574">Periplasm</keyword>
<keyword id="KW-0732">Signal</keyword>
<evidence type="ECO:0000255" key="1"/>
<evidence type="ECO:0000305" key="2"/>
<protein>
    <recommendedName>
        <fullName>UPF0194 membrane protein in asrC 5'region</fullName>
    </recommendedName>
    <alternativeName>
        <fullName>ORF1</fullName>
    </alternativeName>
</protein>
<proteinExistence type="inferred from homology"/>
<organism>
    <name type="scientific">Acidithiobacillus ferridurans</name>
    <dbReference type="NCBI Taxonomy" id="1232575"/>
    <lineage>
        <taxon>Bacteria</taxon>
        <taxon>Pseudomonadati</taxon>
        <taxon>Pseudomonadota</taxon>
        <taxon>Acidithiobacillia</taxon>
        <taxon>Acidithiobacillales</taxon>
        <taxon>Acidithiobacillaceae</taxon>
        <taxon>Acidithiobacillus</taxon>
    </lineage>
</organism>